<name>SCPA_STRU0</name>
<protein>
    <recommendedName>
        <fullName evidence="1">Segregation and condensation protein A</fullName>
    </recommendedName>
</protein>
<sequence>MDIKINDFEGPLDLLLHLVSKYQMDIYQVPIVAVIEQYLAYIETLQAMKLEVAGEYMVMASQLMLIKSRRLLPTITEVSSEELDPEEDLLSKIEEYSRFKELSQQLGYQHDQRALLFSKPKQELIFEDAVLNEDKSITDLFLAFSKIMAIKQEEVKNNHTVIERDDFRIEDMMDHLDTVLNAKTEITLSEVFKDCTSINEVITMFLATLELIKIQAVTVFQEDNFSDIILRKENR</sequence>
<keyword id="KW-0131">Cell cycle</keyword>
<keyword id="KW-0132">Cell division</keyword>
<keyword id="KW-0159">Chromosome partition</keyword>
<keyword id="KW-0963">Cytoplasm</keyword>
<keyword id="KW-1185">Reference proteome</keyword>
<comment type="function">
    <text evidence="1">Participates in chromosomal partition during cell division. May act via the formation of a condensin-like complex containing Smc and ScpB that pull DNA away from mid-cell into both cell halves.</text>
</comment>
<comment type="subunit">
    <text evidence="1">Component of a cohesin-like complex composed of ScpA, ScpB and the Smc homodimer, in which ScpA and ScpB bind to the head domain of Smc. The presence of the three proteins is required for the association of the complex with DNA.</text>
</comment>
<comment type="subcellular location">
    <subcellularLocation>
        <location evidence="1">Cytoplasm</location>
    </subcellularLocation>
    <text evidence="1">Associated with two foci at the outer edges of the nucleoid region in young cells, and at four foci within both cell halves in older cells.</text>
</comment>
<comment type="similarity">
    <text evidence="1">Belongs to the ScpA family.</text>
</comment>
<proteinExistence type="inferred from homology"/>
<accession>B9DTS4</accession>
<organism>
    <name type="scientific">Streptococcus uberis (strain ATCC BAA-854 / 0140J)</name>
    <dbReference type="NCBI Taxonomy" id="218495"/>
    <lineage>
        <taxon>Bacteria</taxon>
        <taxon>Bacillati</taxon>
        <taxon>Bacillota</taxon>
        <taxon>Bacilli</taxon>
        <taxon>Lactobacillales</taxon>
        <taxon>Streptococcaceae</taxon>
        <taxon>Streptococcus</taxon>
    </lineage>
</organism>
<gene>
    <name evidence="1" type="primary">scpA</name>
    <name type="ordered locus">SUB0405</name>
</gene>
<evidence type="ECO:0000255" key="1">
    <source>
        <dbReference type="HAMAP-Rule" id="MF_01805"/>
    </source>
</evidence>
<reference key="1">
    <citation type="journal article" date="2009" name="BMC Genomics">
        <title>Evidence for niche adaptation in the genome of the bovine pathogen Streptococcus uberis.</title>
        <authorList>
            <person name="Ward P.N."/>
            <person name="Holden M.T.G."/>
            <person name="Leigh J.A."/>
            <person name="Lennard N."/>
            <person name="Bignell A."/>
            <person name="Barron A."/>
            <person name="Clark L."/>
            <person name="Quail M.A."/>
            <person name="Woodward J."/>
            <person name="Barrell B.G."/>
            <person name="Egan S.A."/>
            <person name="Field T.R."/>
            <person name="Maskell D."/>
            <person name="Kehoe M."/>
            <person name="Dowson C.G."/>
            <person name="Chanter N."/>
            <person name="Whatmore A.M."/>
            <person name="Bentley S.D."/>
            <person name="Parkhill J."/>
        </authorList>
    </citation>
    <scope>NUCLEOTIDE SEQUENCE [LARGE SCALE GENOMIC DNA]</scope>
    <source>
        <strain>ATCC BAA-854 / 0140J</strain>
    </source>
</reference>
<feature type="chain" id="PRO_1000187574" description="Segregation and condensation protein A">
    <location>
        <begin position="1"/>
        <end position="235"/>
    </location>
</feature>
<dbReference type="EMBL" id="AM946015">
    <property type="protein sequence ID" value="CAR41047.1"/>
    <property type="molecule type" value="Genomic_DNA"/>
</dbReference>
<dbReference type="RefSeq" id="WP_012657940.1">
    <property type="nucleotide sequence ID" value="NC_012004.1"/>
</dbReference>
<dbReference type="SMR" id="B9DTS4"/>
<dbReference type="STRING" id="218495.SUB0405"/>
<dbReference type="KEGG" id="sub:SUB0405"/>
<dbReference type="eggNOG" id="COG1354">
    <property type="taxonomic scope" value="Bacteria"/>
</dbReference>
<dbReference type="HOGENOM" id="CLU_038686_3_3_9"/>
<dbReference type="OrthoDB" id="9811016at2"/>
<dbReference type="Proteomes" id="UP000000449">
    <property type="component" value="Chromosome"/>
</dbReference>
<dbReference type="GO" id="GO:0005737">
    <property type="term" value="C:cytoplasm"/>
    <property type="evidence" value="ECO:0007669"/>
    <property type="project" value="UniProtKB-SubCell"/>
</dbReference>
<dbReference type="GO" id="GO:0051301">
    <property type="term" value="P:cell division"/>
    <property type="evidence" value="ECO:0007669"/>
    <property type="project" value="UniProtKB-KW"/>
</dbReference>
<dbReference type="GO" id="GO:0007059">
    <property type="term" value="P:chromosome segregation"/>
    <property type="evidence" value="ECO:0007669"/>
    <property type="project" value="UniProtKB-UniRule"/>
</dbReference>
<dbReference type="GO" id="GO:0006260">
    <property type="term" value="P:DNA replication"/>
    <property type="evidence" value="ECO:0007669"/>
    <property type="project" value="UniProtKB-UniRule"/>
</dbReference>
<dbReference type="Gene3D" id="6.10.250.2410">
    <property type="match status" value="1"/>
</dbReference>
<dbReference type="Gene3D" id="1.10.10.580">
    <property type="entry name" value="Structural maintenance of chromosome 1. Chain E"/>
    <property type="match status" value="1"/>
</dbReference>
<dbReference type="HAMAP" id="MF_01805">
    <property type="entry name" value="ScpA"/>
    <property type="match status" value="1"/>
</dbReference>
<dbReference type="InterPro" id="IPR003768">
    <property type="entry name" value="ScpA"/>
</dbReference>
<dbReference type="InterPro" id="IPR023093">
    <property type="entry name" value="ScpA-like_C"/>
</dbReference>
<dbReference type="NCBIfam" id="NF000993">
    <property type="entry name" value="PRK00104.1-2"/>
    <property type="match status" value="1"/>
</dbReference>
<dbReference type="PANTHER" id="PTHR33969">
    <property type="entry name" value="SEGREGATION AND CONDENSATION PROTEIN A"/>
    <property type="match status" value="1"/>
</dbReference>
<dbReference type="PANTHER" id="PTHR33969:SF2">
    <property type="entry name" value="SEGREGATION AND CONDENSATION PROTEIN A"/>
    <property type="match status" value="1"/>
</dbReference>
<dbReference type="Pfam" id="PF02616">
    <property type="entry name" value="SMC_ScpA"/>
    <property type="match status" value="1"/>
</dbReference>